<protein>
    <recommendedName>
        <fullName>Cyclin-dependent kinases regulatory subunit 1</fullName>
    </recommendedName>
</protein>
<evidence type="ECO:0000250" key="1"/>
<evidence type="ECO:0000269" key="2">
    <source>
    </source>
</evidence>
<evidence type="ECO:0000305" key="3"/>
<accession>Q6PS57</accession>
<accession>B7F768</accession>
<accession>Q947Y1</accession>
<organism>
    <name type="scientific">Oryza sativa subsp. japonica</name>
    <name type="common">Rice</name>
    <dbReference type="NCBI Taxonomy" id="39947"/>
    <lineage>
        <taxon>Eukaryota</taxon>
        <taxon>Viridiplantae</taxon>
        <taxon>Streptophyta</taxon>
        <taxon>Embryophyta</taxon>
        <taxon>Tracheophyta</taxon>
        <taxon>Spermatophyta</taxon>
        <taxon>Magnoliopsida</taxon>
        <taxon>Liliopsida</taxon>
        <taxon>Poales</taxon>
        <taxon>Poaceae</taxon>
        <taxon>BOP clade</taxon>
        <taxon>Oryzoideae</taxon>
        <taxon>Oryzeae</taxon>
        <taxon>Oryzinae</taxon>
        <taxon>Oryza</taxon>
        <taxon>Oryza sativa</taxon>
    </lineage>
</organism>
<comment type="function">
    <text evidence="1">Binds to the catalytic subunit of the cyclin dependent kinases and is essential for their biological function.</text>
</comment>
<comment type="induction">
    <text evidence="2">By auxin.</text>
</comment>
<comment type="similarity">
    <text evidence="3">Belongs to the CKS family.</text>
</comment>
<proteinExistence type="evidence at transcript level"/>
<keyword id="KW-0131">Cell cycle</keyword>
<keyword id="KW-0132">Cell division</keyword>
<keyword id="KW-1185">Reference proteome</keyword>
<gene>
    <name type="primary">CKS1</name>
    <name type="ordered locus">Os03g0146300</name>
    <name type="ordered locus">LOC_Os03g05300</name>
    <name type="ORF">OsJ_009058</name>
    <name type="ORF">OSJNBa0067N01.15</name>
</gene>
<feature type="chain" id="PRO_0000295670" description="Cyclin-dependent kinases regulatory subunit 1">
    <location>
        <begin position="1"/>
        <end position="90"/>
    </location>
</feature>
<dbReference type="EMBL" id="AY583319">
    <property type="protein sequence ID" value="AAS99236.1"/>
    <property type="molecule type" value="mRNA"/>
</dbReference>
<dbReference type="EMBL" id="AC090485">
    <property type="protein sequence ID" value="AAK98736.1"/>
    <property type="molecule type" value="Genomic_DNA"/>
</dbReference>
<dbReference type="EMBL" id="DP000009">
    <property type="protein sequence ID" value="ABF93962.1"/>
    <property type="molecule type" value="Genomic_DNA"/>
</dbReference>
<dbReference type="EMBL" id="AP008209">
    <property type="protein sequence ID" value="BAF10871.1"/>
    <property type="molecule type" value="Genomic_DNA"/>
</dbReference>
<dbReference type="EMBL" id="AP014959">
    <property type="protein sequence ID" value="BAS82279.1"/>
    <property type="molecule type" value="Genomic_DNA"/>
</dbReference>
<dbReference type="EMBL" id="CM000140">
    <property type="protein sequence ID" value="EAZ25575.1"/>
    <property type="molecule type" value="Genomic_DNA"/>
</dbReference>
<dbReference type="EMBL" id="AK121395">
    <property type="protein sequence ID" value="BAH00466.1"/>
    <property type="molecule type" value="mRNA"/>
</dbReference>
<dbReference type="RefSeq" id="XP_015628990.1">
    <property type="nucleotide sequence ID" value="XM_015773504.1"/>
</dbReference>
<dbReference type="SMR" id="Q6PS57"/>
<dbReference type="FunCoup" id="Q6PS57">
    <property type="interactions" value="1346"/>
</dbReference>
<dbReference type="STRING" id="39947.Q6PS57"/>
<dbReference type="PaxDb" id="39947-Q6PS57"/>
<dbReference type="EnsemblPlants" id="Os03t0146300-01">
    <property type="protein sequence ID" value="Os03t0146300-01"/>
    <property type="gene ID" value="Os03g0146300"/>
</dbReference>
<dbReference type="Gramene" id="Os03t0146300-01">
    <property type="protein sequence ID" value="Os03t0146300-01"/>
    <property type="gene ID" value="Os03g0146300"/>
</dbReference>
<dbReference type="KEGG" id="dosa:Os03g0146300"/>
<dbReference type="eggNOG" id="KOG3484">
    <property type="taxonomic scope" value="Eukaryota"/>
</dbReference>
<dbReference type="HOGENOM" id="CLU_140546_2_0_1"/>
<dbReference type="InParanoid" id="Q6PS57"/>
<dbReference type="OMA" id="RPINYGQ"/>
<dbReference type="OrthoDB" id="440676at2759"/>
<dbReference type="Proteomes" id="UP000000763">
    <property type="component" value="Chromosome 3"/>
</dbReference>
<dbReference type="Proteomes" id="UP000007752">
    <property type="component" value="Chromosome 3"/>
</dbReference>
<dbReference type="Proteomes" id="UP000059680">
    <property type="component" value="Chromosome 3"/>
</dbReference>
<dbReference type="GO" id="GO:0000307">
    <property type="term" value="C:cyclin-dependent protein kinase holoenzyme complex"/>
    <property type="evidence" value="ECO:0000318"/>
    <property type="project" value="GO_Central"/>
</dbReference>
<dbReference type="GO" id="GO:0019005">
    <property type="term" value="C:SCF ubiquitin ligase complex"/>
    <property type="evidence" value="ECO:0000318"/>
    <property type="project" value="GO_Central"/>
</dbReference>
<dbReference type="GO" id="GO:0061575">
    <property type="term" value="F:cyclin-dependent protein serine/threonine kinase activator activity"/>
    <property type="evidence" value="ECO:0000318"/>
    <property type="project" value="GO_Central"/>
</dbReference>
<dbReference type="GO" id="GO:0042393">
    <property type="term" value="F:histone binding"/>
    <property type="evidence" value="ECO:0000318"/>
    <property type="project" value="GO_Central"/>
</dbReference>
<dbReference type="GO" id="GO:0019901">
    <property type="term" value="F:protein kinase binding"/>
    <property type="evidence" value="ECO:0000318"/>
    <property type="project" value="GO_Central"/>
</dbReference>
<dbReference type="GO" id="GO:0043130">
    <property type="term" value="F:ubiquitin binding"/>
    <property type="evidence" value="ECO:0000318"/>
    <property type="project" value="GO_Central"/>
</dbReference>
<dbReference type="GO" id="GO:0051301">
    <property type="term" value="P:cell division"/>
    <property type="evidence" value="ECO:0007669"/>
    <property type="project" value="UniProtKB-KW"/>
</dbReference>
<dbReference type="GO" id="GO:0007346">
    <property type="term" value="P:regulation of mitotic cell cycle"/>
    <property type="evidence" value="ECO:0000318"/>
    <property type="project" value="GO_Central"/>
</dbReference>
<dbReference type="FunFam" id="3.30.170.10:FF:000003">
    <property type="entry name" value="Cyclin-dependent kinases regulatory subunit"/>
    <property type="match status" value="1"/>
</dbReference>
<dbReference type="Gene3D" id="3.30.170.10">
    <property type="entry name" value="Cyclin-dependent kinase, regulatory subunit"/>
    <property type="match status" value="1"/>
</dbReference>
<dbReference type="InterPro" id="IPR000789">
    <property type="entry name" value="Cyclin-dep_kinase_reg-sub"/>
</dbReference>
<dbReference type="InterPro" id="IPR036858">
    <property type="entry name" value="Cyclin-dep_kinase_reg-sub_sf"/>
</dbReference>
<dbReference type="PANTHER" id="PTHR23415">
    <property type="entry name" value="CYCLIN-DEPENDENT KINASES REGULATORY SUBUNIT/60S RIBOSOME SUBUNIT BIOGENESIS PROTEIN NIP7"/>
    <property type="match status" value="1"/>
</dbReference>
<dbReference type="Pfam" id="PF01111">
    <property type="entry name" value="CKS"/>
    <property type="match status" value="1"/>
</dbReference>
<dbReference type="PRINTS" id="PR00296">
    <property type="entry name" value="CYCLINKINASE"/>
</dbReference>
<dbReference type="SMART" id="SM01084">
    <property type="entry name" value="CKS"/>
    <property type="match status" value="1"/>
</dbReference>
<dbReference type="SUPFAM" id="SSF55637">
    <property type="entry name" value="Cell cycle regulatory proteins"/>
    <property type="match status" value="1"/>
</dbReference>
<dbReference type="PROSITE" id="PS00944">
    <property type="entry name" value="CKS_1"/>
    <property type="match status" value="1"/>
</dbReference>
<reference key="1">
    <citation type="submission" date="2004-03" db="EMBL/GenBank/DDBJ databases">
        <title>Characterization of the rice (Oryza sativa) cyclin-dependent kinase subunit gene Oryza; CKS1.</title>
        <authorList>
            <person name="Zhang C.-L."/>
            <person name="Jiang X.-C."/>
            <person name="Slater A."/>
            <person name="Elliott M.C."/>
        </authorList>
    </citation>
    <scope>NUCLEOTIDE SEQUENCE [MRNA]</scope>
</reference>
<reference key="2">
    <citation type="journal article" date="2005" name="Genome Res.">
        <title>Sequence, annotation, and analysis of synteny between rice chromosome 3 and diverged grass species.</title>
        <authorList>
            <consortium name="The rice chromosome 3 sequencing consortium"/>
            <person name="Buell C.R."/>
            <person name="Yuan Q."/>
            <person name="Ouyang S."/>
            <person name="Liu J."/>
            <person name="Zhu W."/>
            <person name="Wang A."/>
            <person name="Maiti R."/>
            <person name="Haas B."/>
            <person name="Wortman J."/>
            <person name="Pertea M."/>
            <person name="Jones K.M."/>
            <person name="Kim M."/>
            <person name="Overton L."/>
            <person name="Tsitrin T."/>
            <person name="Fadrosh D."/>
            <person name="Bera J."/>
            <person name="Weaver B."/>
            <person name="Jin S."/>
            <person name="Johri S."/>
            <person name="Reardon M."/>
            <person name="Webb K."/>
            <person name="Hill J."/>
            <person name="Moffat K."/>
            <person name="Tallon L."/>
            <person name="Van Aken S."/>
            <person name="Lewis M."/>
            <person name="Utterback T."/>
            <person name="Feldblyum T."/>
            <person name="Zismann V."/>
            <person name="Iobst S."/>
            <person name="Hsiao J."/>
            <person name="de Vazeille A.R."/>
            <person name="Salzberg S.L."/>
            <person name="White O."/>
            <person name="Fraser C.M."/>
            <person name="Yu Y."/>
            <person name="Kim H."/>
            <person name="Rambo T."/>
            <person name="Currie J."/>
            <person name="Collura K."/>
            <person name="Kernodle-Thompson S."/>
            <person name="Wei F."/>
            <person name="Kudrna K."/>
            <person name="Ammiraju J.S.S."/>
            <person name="Luo M."/>
            <person name="Goicoechea J.L."/>
            <person name="Wing R.A."/>
            <person name="Henry D."/>
            <person name="Oates R."/>
            <person name="Palmer M."/>
            <person name="Pries G."/>
            <person name="Saski C."/>
            <person name="Simmons J."/>
            <person name="Soderlund C."/>
            <person name="Nelson W."/>
            <person name="de la Bastide M."/>
            <person name="Spiegel L."/>
            <person name="Nascimento L."/>
            <person name="Huang E."/>
            <person name="Preston R."/>
            <person name="Zutavern T."/>
            <person name="Palmer L."/>
            <person name="O'Shaughnessy A."/>
            <person name="Dike S."/>
            <person name="McCombie W.R."/>
            <person name="Minx P."/>
            <person name="Cordum H."/>
            <person name="Wilson R."/>
            <person name="Jin W."/>
            <person name="Lee H.R."/>
            <person name="Jiang J."/>
            <person name="Jackson S."/>
        </authorList>
    </citation>
    <scope>NUCLEOTIDE SEQUENCE [LARGE SCALE GENOMIC DNA]</scope>
    <source>
        <strain>cv. Nipponbare</strain>
    </source>
</reference>
<reference key="3">
    <citation type="journal article" date="2005" name="Nature">
        <title>The map-based sequence of the rice genome.</title>
        <authorList>
            <consortium name="International rice genome sequencing project (IRGSP)"/>
        </authorList>
    </citation>
    <scope>NUCLEOTIDE SEQUENCE [LARGE SCALE GENOMIC DNA]</scope>
    <source>
        <strain>cv. Nipponbare</strain>
    </source>
</reference>
<reference key="4">
    <citation type="journal article" date="2008" name="Nucleic Acids Res.">
        <title>The rice annotation project database (RAP-DB): 2008 update.</title>
        <authorList>
            <consortium name="The rice annotation project (RAP)"/>
        </authorList>
    </citation>
    <scope>GENOME REANNOTATION</scope>
    <source>
        <strain>cv. Nipponbare</strain>
    </source>
</reference>
<reference key="5">
    <citation type="journal article" date="2013" name="Rice">
        <title>Improvement of the Oryza sativa Nipponbare reference genome using next generation sequence and optical map data.</title>
        <authorList>
            <person name="Kawahara Y."/>
            <person name="de la Bastide M."/>
            <person name="Hamilton J.P."/>
            <person name="Kanamori H."/>
            <person name="McCombie W.R."/>
            <person name="Ouyang S."/>
            <person name="Schwartz D.C."/>
            <person name="Tanaka T."/>
            <person name="Wu J."/>
            <person name="Zhou S."/>
            <person name="Childs K.L."/>
            <person name="Davidson R.M."/>
            <person name="Lin H."/>
            <person name="Quesada-Ocampo L."/>
            <person name="Vaillancourt B."/>
            <person name="Sakai H."/>
            <person name="Lee S.S."/>
            <person name="Kim J."/>
            <person name="Numa H."/>
            <person name="Itoh T."/>
            <person name="Buell C.R."/>
            <person name="Matsumoto T."/>
        </authorList>
    </citation>
    <scope>GENOME REANNOTATION</scope>
    <source>
        <strain>cv. Nipponbare</strain>
    </source>
</reference>
<reference key="6">
    <citation type="journal article" date="2005" name="PLoS Biol.">
        <title>The genomes of Oryza sativa: a history of duplications.</title>
        <authorList>
            <person name="Yu J."/>
            <person name="Wang J."/>
            <person name="Lin W."/>
            <person name="Li S."/>
            <person name="Li H."/>
            <person name="Zhou J."/>
            <person name="Ni P."/>
            <person name="Dong W."/>
            <person name="Hu S."/>
            <person name="Zeng C."/>
            <person name="Zhang J."/>
            <person name="Zhang Y."/>
            <person name="Li R."/>
            <person name="Xu Z."/>
            <person name="Li S."/>
            <person name="Li X."/>
            <person name="Zheng H."/>
            <person name="Cong L."/>
            <person name="Lin L."/>
            <person name="Yin J."/>
            <person name="Geng J."/>
            <person name="Li G."/>
            <person name="Shi J."/>
            <person name="Liu J."/>
            <person name="Lv H."/>
            <person name="Li J."/>
            <person name="Wang J."/>
            <person name="Deng Y."/>
            <person name="Ran L."/>
            <person name="Shi X."/>
            <person name="Wang X."/>
            <person name="Wu Q."/>
            <person name="Li C."/>
            <person name="Ren X."/>
            <person name="Wang J."/>
            <person name="Wang X."/>
            <person name="Li D."/>
            <person name="Liu D."/>
            <person name="Zhang X."/>
            <person name="Ji Z."/>
            <person name="Zhao W."/>
            <person name="Sun Y."/>
            <person name="Zhang Z."/>
            <person name="Bao J."/>
            <person name="Han Y."/>
            <person name="Dong L."/>
            <person name="Ji J."/>
            <person name="Chen P."/>
            <person name="Wu S."/>
            <person name="Liu J."/>
            <person name="Xiao Y."/>
            <person name="Bu D."/>
            <person name="Tan J."/>
            <person name="Yang L."/>
            <person name="Ye C."/>
            <person name="Zhang J."/>
            <person name="Xu J."/>
            <person name="Zhou Y."/>
            <person name="Yu Y."/>
            <person name="Zhang B."/>
            <person name="Zhuang S."/>
            <person name="Wei H."/>
            <person name="Liu B."/>
            <person name="Lei M."/>
            <person name="Yu H."/>
            <person name="Li Y."/>
            <person name="Xu H."/>
            <person name="Wei S."/>
            <person name="He X."/>
            <person name="Fang L."/>
            <person name="Zhang Z."/>
            <person name="Zhang Y."/>
            <person name="Huang X."/>
            <person name="Su Z."/>
            <person name="Tong W."/>
            <person name="Li J."/>
            <person name="Tong Z."/>
            <person name="Li S."/>
            <person name="Ye J."/>
            <person name="Wang L."/>
            <person name="Fang L."/>
            <person name="Lei T."/>
            <person name="Chen C.-S."/>
            <person name="Chen H.-C."/>
            <person name="Xu Z."/>
            <person name="Li H."/>
            <person name="Huang H."/>
            <person name="Zhang F."/>
            <person name="Xu H."/>
            <person name="Li N."/>
            <person name="Zhao C."/>
            <person name="Li S."/>
            <person name="Dong L."/>
            <person name="Huang Y."/>
            <person name="Li L."/>
            <person name="Xi Y."/>
            <person name="Qi Q."/>
            <person name="Li W."/>
            <person name="Zhang B."/>
            <person name="Hu W."/>
            <person name="Zhang Y."/>
            <person name="Tian X."/>
            <person name="Jiao Y."/>
            <person name="Liang X."/>
            <person name="Jin J."/>
            <person name="Gao L."/>
            <person name="Zheng W."/>
            <person name="Hao B."/>
            <person name="Liu S.-M."/>
            <person name="Wang W."/>
            <person name="Yuan L."/>
            <person name="Cao M."/>
            <person name="McDermott J."/>
            <person name="Samudrala R."/>
            <person name="Wang J."/>
            <person name="Wong G.K.-S."/>
            <person name="Yang H."/>
        </authorList>
    </citation>
    <scope>NUCLEOTIDE SEQUENCE [LARGE SCALE GENOMIC DNA]</scope>
    <source>
        <strain>cv. Nipponbare</strain>
    </source>
</reference>
<reference key="7">
    <citation type="journal article" date="2003" name="Science">
        <title>Collection, mapping, and annotation of over 28,000 cDNA clones from japonica rice.</title>
        <authorList>
            <consortium name="The rice full-length cDNA consortium"/>
        </authorList>
    </citation>
    <scope>NUCLEOTIDE SEQUENCE [LARGE SCALE MRNA]</scope>
    <source>
        <strain>cv. Nipponbare</strain>
    </source>
</reference>
<reference key="8">
    <citation type="journal article" date="2007" name="Plant Mol. Biol.">
        <title>Genome-wide identification and expression analysis of rice cell cycle genes.</title>
        <authorList>
            <person name="Guo J."/>
            <person name="Song J."/>
            <person name="Wang F."/>
            <person name="Zhang X.S."/>
        </authorList>
    </citation>
    <scope>INDUCTION</scope>
    <scope>GENE FAMILY</scope>
</reference>
<sequence length="90" mass="10603">MGQIQYSEKYFDDTYEYRHVVLPPEVAKLLPKNRLLSENEWRAIGVQQSRGWVHYAIHRPEPHIMLFRRPLNFQQQQEAAAAAAAQMLPK</sequence>
<name>CKS1_ORYSJ</name>